<keyword id="KW-0325">Glycoprotein</keyword>
<keyword id="KW-0494">Milk protein</keyword>
<keyword id="KW-0597">Phosphoprotein</keyword>
<keyword id="KW-0964">Secreted</keyword>
<gene>
    <name type="primary">CSN3</name>
    <name type="synonym">CSN10</name>
    <name type="synonym">CSNK</name>
</gene>
<organism>
    <name type="scientific">Mazama americana</name>
    <name type="common">Red brocket deer</name>
    <dbReference type="NCBI Taxonomy" id="43334"/>
    <lineage>
        <taxon>Eukaryota</taxon>
        <taxon>Metazoa</taxon>
        <taxon>Chordata</taxon>
        <taxon>Craniata</taxon>
        <taxon>Vertebrata</taxon>
        <taxon>Euteleostomi</taxon>
        <taxon>Mammalia</taxon>
        <taxon>Eutheria</taxon>
        <taxon>Laurasiatheria</taxon>
        <taxon>Artiodactyla</taxon>
        <taxon>Ruminantia</taxon>
        <taxon>Pecora</taxon>
        <taxon>Cervidae</taxon>
        <taxon>Odocoileinae</taxon>
        <taxon>Mazama</taxon>
    </lineage>
</organism>
<feature type="chain" id="PRO_0000144113" description="Kappa-casein">
    <location>
        <begin position="1" status="less than"/>
        <end position="122"/>
    </location>
</feature>
<feature type="site" description="Cleavage; by chymosin/rennin" evidence="1">
    <location>
        <begin position="58"/>
        <end position="59"/>
    </location>
</feature>
<feature type="modified residue" description="Phosphothreonine" evidence="2">
    <location>
        <position position="98"/>
    </location>
</feature>
<feature type="modified residue" description="Phosphoserine; alternate" evidence="2">
    <location>
        <position position="102"/>
    </location>
</feature>
<feature type="modified residue" description="Phosphoserine" evidence="3">
    <location>
        <position position="119"/>
    </location>
</feature>
<feature type="glycosylation site" description="O-linked (GalNAc...) threonine" evidence="2">
    <location>
        <position position="74"/>
    </location>
</feature>
<feature type="glycosylation site" description="O-linked (GalNAc...) threonine" evidence="2">
    <location>
        <position position="84"/>
    </location>
</feature>
<feature type="glycosylation site" description="O-linked (GalNAc...) threonine" evidence="2">
    <location>
        <position position="86"/>
    </location>
</feature>
<feature type="glycosylation site" description="O-linked (GalNAc...) threonine" evidence="2">
    <location>
        <position position="89"/>
    </location>
</feature>
<feature type="glycosylation site" description="O-linked (GalNAc...) threonine" evidence="2">
    <location>
        <position position="95"/>
    </location>
</feature>
<feature type="glycosylation site" description="O-linked (GalNAc...) serine; alternate" evidence="2">
    <location>
        <position position="102"/>
    </location>
</feature>
<feature type="glycosylation site" description="O-linked (GalNAc...) threonine" evidence="2">
    <location>
        <position position="118"/>
    </location>
</feature>
<feature type="non-terminal residue">
    <location>
        <position position="1"/>
    </location>
</feature>
<comment type="function">
    <text>Kappa-casein stabilizes micelle formation, preventing casein precipitation in milk.</text>
</comment>
<comment type="subcellular location">
    <subcellularLocation>
        <location>Secreted</location>
    </subcellularLocation>
</comment>
<comment type="tissue specificity">
    <text>Mammary gland specific. Secreted in milk.</text>
</comment>
<comment type="similarity">
    <text evidence="4">Belongs to the kappa-casein family.</text>
</comment>
<sequence>VALINNQFLSYPYYAKPGAVRSPAQILQWQVLPNTVPAKSCQVQPTTLARHPHPRLSFMAIPPKKNQDKTDIPTINTIATVESTITPTTEAIVDTVATLEASSEVIESAPETNTDQVTSTVV</sequence>
<proteinExistence type="evidence at transcript level"/>
<dbReference type="EMBL" id="U37362">
    <property type="protein sequence ID" value="AAC48644.1"/>
    <property type="molecule type" value="Genomic_DNA"/>
</dbReference>
<dbReference type="GlyCosmos" id="Q95191">
    <property type="glycosylation" value="7 sites, No reported glycans"/>
</dbReference>
<dbReference type="GO" id="GO:0005615">
    <property type="term" value="C:extracellular space"/>
    <property type="evidence" value="ECO:0007669"/>
    <property type="project" value="TreeGrafter"/>
</dbReference>
<dbReference type="GO" id="GO:0007595">
    <property type="term" value="P:lactation"/>
    <property type="evidence" value="ECO:0007669"/>
    <property type="project" value="TreeGrafter"/>
</dbReference>
<dbReference type="GO" id="GO:0050821">
    <property type="term" value="P:protein stabilization"/>
    <property type="evidence" value="ECO:0007669"/>
    <property type="project" value="TreeGrafter"/>
</dbReference>
<dbReference type="InterPro" id="IPR000117">
    <property type="entry name" value="Casein_kappa"/>
</dbReference>
<dbReference type="PANTHER" id="PTHR11470">
    <property type="entry name" value="KAPPA CASEIN"/>
    <property type="match status" value="1"/>
</dbReference>
<dbReference type="PANTHER" id="PTHR11470:SF2">
    <property type="entry name" value="KAPPA-CASEIN"/>
    <property type="match status" value="1"/>
</dbReference>
<dbReference type="Pfam" id="PF00997">
    <property type="entry name" value="Casein_kappa"/>
    <property type="match status" value="1"/>
</dbReference>
<reference key="1">
    <citation type="journal article" date="1996" name="Mol. Phylogenet. Evol.">
        <title>K-casein gene phylogeny of higher ruminants (Pecora, Artiodactyla).</title>
        <authorList>
            <person name="Cronin M.A."/>
            <person name="Stuart R."/>
            <person name="Pierson B.J."/>
            <person name="Patton J.C."/>
        </authorList>
    </citation>
    <scope>NUCLEOTIDE SEQUENCE [GENOMIC DNA]</scope>
</reference>
<protein>
    <recommendedName>
        <fullName>Kappa-casein</fullName>
    </recommendedName>
</protein>
<name>CASK_MAZAM</name>
<evidence type="ECO:0000250" key="1"/>
<evidence type="ECO:0000250" key="2">
    <source>
        <dbReference type="UniProtKB" id="P02668"/>
    </source>
</evidence>
<evidence type="ECO:0000250" key="3">
    <source>
        <dbReference type="UniProtKB" id="P02670"/>
    </source>
</evidence>
<evidence type="ECO:0000305" key="4"/>
<accession>Q95191</accession>